<sequence length="204" mass="23788">MSIHPKLNNKQRRIGLTGGIASGKSTIAKYIKEYIDIPILDADQYSKDLIKPKSNCYKKVVAYFGPQIVDQHSSENEINRALLKKIIFENSIHRKWIQNLLHPLIKEKMIEKCNQFDKNKILLLVIPLLFEAKFGDICTEIWLVKCPKEVQKKRLMKRNIISENEAQKIINLQLNFEDKSKFADVILDNSDNKQLWKNTIKKLV</sequence>
<keyword id="KW-0067">ATP-binding</keyword>
<keyword id="KW-0173">Coenzyme A biosynthesis</keyword>
<keyword id="KW-0963">Cytoplasm</keyword>
<keyword id="KW-0418">Kinase</keyword>
<keyword id="KW-0547">Nucleotide-binding</keyword>
<keyword id="KW-0808">Transferase</keyword>
<accession>Q7V3M6</accession>
<name>COAE_PROMP</name>
<comment type="function">
    <text evidence="1">Catalyzes the phosphorylation of the 3'-hydroxyl group of dephosphocoenzyme A to form coenzyme A.</text>
</comment>
<comment type="catalytic activity">
    <reaction evidence="1">
        <text>3'-dephospho-CoA + ATP = ADP + CoA + H(+)</text>
        <dbReference type="Rhea" id="RHEA:18245"/>
        <dbReference type="ChEBI" id="CHEBI:15378"/>
        <dbReference type="ChEBI" id="CHEBI:30616"/>
        <dbReference type="ChEBI" id="CHEBI:57287"/>
        <dbReference type="ChEBI" id="CHEBI:57328"/>
        <dbReference type="ChEBI" id="CHEBI:456216"/>
        <dbReference type="EC" id="2.7.1.24"/>
    </reaction>
</comment>
<comment type="pathway">
    <text evidence="1">Cofactor biosynthesis; coenzyme A biosynthesis; CoA from (R)-pantothenate: step 5/5.</text>
</comment>
<comment type="subcellular location">
    <subcellularLocation>
        <location evidence="1">Cytoplasm</location>
    </subcellularLocation>
</comment>
<comment type="similarity">
    <text evidence="1">Belongs to the CoaE family.</text>
</comment>
<gene>
    <name evidence="1" type="primary">coaE</name>
    <name type="ordered locus">PMM0049</name>
</gene>
<reference key="1">
    <citation type="journal article" date="2003" name="Nature">
        <title>Genome divergence in two Prochlorococcus ecotypes reflects oceanic niche differentiation.</title>
        <authorList>
            <person name="Rocap G."/>
            <person name="Larimer F.W."/>
            <person name="Lamerdin J.E."/>
            <person name="Malfatti S."/>
            <person name="Chain P."/>
            <person name="Ahlgren N.A."/>
            <person name="Arellano A."/>
            <person name="Coleman M."/>
            <person name="Hauser L."/>
            <person name="Hess W.R."/>
            <person name="Johnson Z.I."/>
            <person name="Land M.L."/>
            <person name="Lindell D."/>
            <person name="Post A.F."/>
            <person name="Regala W."/>
            <person name="Shah M."/>
            <person name="Shaw S.L."/>
            <person name="Steglich C."/>
            <person name="Sullivan M.B."/>
            <person name="Ting C.S."/>
            <person name="Tolonen A."/>
            <person name="Webb E.A."/>
            <person name="Zinser E.R."/>
            <person name="Chisholm S.W."/>
        </authorList>
    </citation>
    <scope>NUCLEOTIDE SEQUENCE [LARGE SCALE GENOMIC DNA]</scope>
    <source>
        <strain>CCMP1986 / NIES-2087 / MED4</strain>
    </source>
</reference>
<dbReference type="EC" id="2.7.1.24" evidence="1"/>
<dbReference type="EMBL" id="BX548174">
    <property type="protein sequence ID" value="CAE18508.1"/>
    <property type="molecule type" value="Genomic_DNA"/>
</dbReference>
<dbReference type="RefSeq" id="WP_011131687.1">
    <property type="nucleotide sequence ID" value="NC_005072.1"/>
</dbReference>
<dbReference type="SMR" id="Q7V3M6"/>
<dbReference type="STRING" id="59919.PMM0049"/>
<dbReference type="KEGG" id="pmm:PMM0049"/>
<dbReference type="eggNOG" id="COG0237">
    <property type="taxonomic scope" value="Bacteria"/>
</dbReference>
<dbReference type="HOGENOM" id="CLU_057180_0_0_3"/>
<dbReference type="OrthoDB" id="9812943at2"/>
<dbReference type="UniPathway" id="UPA00241">
    <property type="reaction ID" value="UER00356"/>
</dbReference>
<dbReference type="Proteomes" id="UP000001026">
    <property type="component" value="Chromosome"/>
</dbReference>
<dbReference type="GO" id="GO:0005737">
    <property type="term" value="C:cytoplasm"/>
    <property type="evidence" value="ECO:0007669"/>
    <property type="project" value="UniProtKB-SubCell"/>
</dbReference>
<dbReference type="GO" id="GO:0005524">
    <property type="term" value="F:ATP binding"/>
    <property type="evidence" value="ECO:0007669"/>
    <property type="project" value="UniProtKB-UniRule"/>
</dbReference>
<dbReference type="GO" id="GO:0004140">
    <property type="term" value="F:dephospho-CoA kinase activity"/>
    <property type="evidence" value="ECO:0007669"/>
    <property type="project" value="UniProtKB-UniRule"/>
</dbReference>
<dbReference type="GO" id="GO:0015937">
    <property type="term" value="P:coenzyme A biosynthetic process"/>
    <property type="evidence" value="ECO:0007669"/>
    <property type="project" value="UniProtKB-UniRule"/>
</dbReference>
<dbReference type="CDD" id="cd02022">
    <property type="entry name" value="DPCK"/>
    <property type="match status" value="1"/>
</dbReference>
<dbReference type="Gene3D" id="3.40.50.300">
    <property type="entry name" value="P-loop containing nucleotide triphosphate hydrolases"/>
    <property type="match status" value="1"/>
</dbReference>
<dbReference type="HAMAP" id="MF_00376">
    <property type="entry name" value="Dephospho_CoA_kinase"/>
    <property type="match status" value="1"/>
</dbReference>
<dbReference type="InterPro" id="IPR001977">
    <property type="entry name" value="Depp_CoAkinase"/>
</dbReference>
<dbReference type="InterPro" id="IPR027417">
    <property type="entry name" value="P-loop_NTPase"/>
</dbReference>
<dbReference type="NCBIfam" id="TIGR00152">
    <property type="entry name" value="dephospho-CoA kinase"/>
    <property type="match status" value="1"/>
</dbReference>
<dbReference type="PANTHER" id="PTHR10695:SF46">
    <property type="entry name" value="BIFUNCTIONAL COENZYME A SYNTHASE-RELATED"/>
    <property type="match status" value="1"/>
</dbReference>
<dbReference type="PANTHER" id="PTHR10695">
    <property type="entry name" value="DEPHOSPHO-COA KINASE-RELATED"/>
    <property type="match status" value="1"/>
</dbReference>
<dbReference type="Pfam" id="PF01121">
    <property type="entry name" value="CoaE"/>
    <property type="match status" value="1"/>
</dbReference>
<dbReference type="SUPFAM" id="SSF52540">
    <property type="entry name" value="P-loop containing nucleoside triphosphate hydrolases"/>
    <property type="match status" value="1"/>
</dbReference>
<dbReference type="PROSITE" id="PS51219">
    <property type="entry name" value="DPCK"/>
    <property type="match status" value="1"/>
</dbReference>
<protein>
    <recommendedName>
        <fullName evidence="1">Dephospho-CoA kinase</fullName>
        <ecNumber evidence="1">2.7.1.24</ecNumber>
    </recommendedName>
    <alternativeName>
        <fullName evidence="1">Dephosphocoenzyme A kinase</fullName>
    </alternativeName>
</protein>
<proteinExistence type="inferred from homology"/>
<feature type="chain" id="PRO_0000172979" description="Dephospho-CoA kinase">
    <location>
        <begin position="1"/>
        <end position="204"/>
    </location>
</feature>
<feature type="domain" description="DPCK" evidence="1">
    <location>
        <begin position="13"/>
        <end position="204"/>
    </location>
</feature>
<feature type="binding site" evidence="1">
    <location>
        <begin position="21"/>
        <end position="26"/>
    </location>
    <ligand>
        <name>ATP</name>
        <dbReference type="ChEBI" id="CHEBI:30616"/>
    </ligand>
</feature>
<organism>
    <name type="scientific">Prochlorococcus marinus subsp. pastoris (strain CCMP1986 / NIES-2087 / MED4)</name>
    <dbReference type="NCBI Taxonomy" id="59919"/>
    <lineage>
        <taxon>Bacteria</taxon>
        <taxon>Bacillati</taxon>
        <taxon>Cyanobacteriota</taxon>
        <taxon>Cyanophyceae</taxon>
        <taxon>Synechococcales</taxon>
        <taxon>Prochlorococcaceae</taxon>
        <taxon>Prochlorococcus</taxon>
    </lineage>
</organism>
<evidence type="ECO:0000255" key="1">
    <source>
        <dbReference type="HAMAP-Rule" id="MF_00376"/>
    </source>
</evidence>